<reference key="1">
    <citation type="journal article" date="2008" name="J. Bacteriol.">
        <title>Genome of the actinomycete plant pathogen Clavibacter michiganensis subsp. sepedonicus suggests recent niche adaptation.</title>
        <authorList>
            <person name="Bentley S.D."/>
            <person name="Corton C."/>
            <person name="Brown S.E."/>
            <person name="Barron A."/>
            <person name="Clark L."/>
            <person name="Doggett J."/>
            <person name="Harris B."/>
            <person name="Ormond D."/>
            <person name="Quail M.A."/>
            <person name="May G."/>
            <person name="Francis D."/>
            <person name="Knudson D."/>
            <person name="Parkhill J."/>
            <person name="Ishimaru C.A."/>
        </authorList>
    </citation>
    <scope>NUCLEOTIDE SEQUENCE [LARGE SCALE GENOMIC DNA]</scope>
    <source>
        <strain>ATCC 33113 / DSM 20744 / JCM 9667 / LMG 2889 / ICMP 2535 / C-1</strain>
    </source>
</reference>
<accession>B0RCR5</accession>
<keyword id="KW-0963">Cytoplasm</keyword>
<keyword id="KW-0255">Endonuclease</keyword>
<keyword id="KW-0378">Hydrolase</keyword>
<keyword id="KW-0479">Metal-binding</keyword>
<keyword id="KW-0540">Nuclease</keyword>
<keyword id="KW-0690">Ribosome biogenesis</keyword>
<keyword id="KW-0698">rRNA processing</keyword>
<keyword id="KW-0862">Zinc</keyword>
<feature type="chain" id="PRO_1000073897" description="Endoribonuclease YbeY">
    <location>
        <begin position="1"/>
        <end position="153"/>
    </location>
</feature>
<feature type="binding site" evidence="1">
    <location>
        <position position="116"/>
    </location>
    <ligand>
        <name>Zn(2+)</name>
        <dbReference type="ChEBI" id="CHEBI:29105"/>
        <note>catalytic</note>
    </ligand>
</feature>
<feature type="binding site" evidence="1">
    <location>
        <position position="120"/>
    </location>
    <ligand>
        <name>Zn(2+)</name>
        <dbReference type="ChEBI" id="CHEBI:29105"/>
        <note>catalytic</note>
    </ligand>
</feature>
<feature type="binding site" evidence="1">
    <location>
        <position position="126"/>
    </location>
    <ligand>
        <name>Zn(2+)</name>
        <dbReference type="ChEBI" id="CHEBI:29105"/>
        <note>catalytic</note>
    </ligand>
</feature>
<protein>
    <recommendedName>
        <fullName evidence="1">Endoribonuclease YbeY</fullName>
        <ecNumber evidence="1">3.1.-.-</ecNumber>
    </recommendedName>
</protein>
<name>YBEY_CLASE</name>
<organism>
    <name type="scientific">Clavibacter sepedonicus</name>
    <name type="common">Clavibacter michiganensis subsp. sepedonicus</name>
    <dbReference type="NCBI Taxonomy" id="31964"/>
    <lineage>
        <taxon>Bacteria</taxon>
        <taxon>Bacillati</taxon>
        <taxon>Actinomycetota</taxon>
        <taxon>Actinomycetes</taxon>
        <taxon>Micrococcales</taxon>
        <taxon>Microbacteriaceae</taxon>
        <taxon>Clavibacter</taxon>
    </lineage>
</organism>
<proteinExistence type="inferred from homology"/>
<dbReference type="EC" id="3.1.-.-" evidence="1"/>
<dbReference type="EMBL" id="AM849034">
    <property type="protein sequence ID" value="CAQ01836.1"/>
    <property type="molecule type" value="Genomic_DNA"/>
</dbReference>
<dbReference type="RefSeq" id="WP_012299081.1">
    <property type="nucleotide sequence ID" value="NZ_MZMN01000003.1"/>
</dbReference>
<dbReference type="SMR" id="B0RCR5"/>
<dbReference type="STRING" id="31964.CMS1734"/>
<dbReference type="KEGG" id="cms:CMS1734"/>
<dbReference type="eggNOG" id="COG0319">
    <property type="taxonomic scope" value="Bacteria"/>
</dbReference>
<dbReference type="HOGENOM" id="CLU_106710_3_2_11"/>
<dbReference type="OrthoDB" id="9807740at2"/>
<dbReference type="Proteomes" id="UP000001318">
    <property type="component" value="Chromosome"/>
</dbReference>
<dbReference type="GO" id="GO:0005737">
    <property type="term" value="C:cytoplasm"/>
    <property type="evidence" value="ECO:0007669"/>
    <property type="project" value="UniProtKB-SubCell"/>
</dbReference>
<dbReference type="GO" id="GO:0004222">
    <property type="term" value="F:metalloendopeptidase activity"/>
    <property type="evidence" value="ECO:0007669"/>
    <property type="project" value="InterPro"/>
</dbReference>
<dbReference type="GO" id="GO:0004521">
    <property type="term" value="F:RNA endonuclease activity"/>
    <property type="evidence" value="ECO:0007669"/>
    <property type="project" value="UniProtKB-UniRule"/>
</dbReference>
<dbReference type="GO" id="GO:0008270">
    <property type="term" value="F:zinc ion binding"/>
    <property type="evidence" value="ECO:0007669"/>
    <property type="project" value="UniProtKB-UniRule"/>
</dbReference>
<dbReference type="GO" id="GO:0006364">
    <property type="term" value="P:rRNA processing"/>
    <property type="evidence" value="ECO:0007669"/>
    <property type="project" value="UniProtKB-UniRule"/>
</dbReference>
<dbReference type="Gene3D" id="3.40.390.30">
    <property type="entry name" value="Metalloproteases ('zincins'), catalytic domain"/>
    <property type="match status" value="1"/>
</dbReference>
<dbReference type="HAMAP" id="MF_00009">
    <property type="entry name" value="Endoribonucl_YbeY"/>
    <property type="match status" value="1"/>
</dbReference>
<dbReference type="InterPro" id="IPR023091">
    <property type="entry name" value="MetalPrtase_cat_dom_sf_prd"/>
</dbReference>
<dbReference type="InterPro" id="IPR002036">
    <property type="entry name" value="YbeY"/>
</dbReference>
<dbReference type="InterPro" id="IPR020549">
    <property type="entry name" value="YbeY_CS"/>
</dbReference>
<dbReference type="NCBIfam" id="TIGR00043">
    <property type="entry name" value="rRNA maturation RNase YbeY"/>
    <property type="match status" value="1"/>
</dbReference>
<dbReference type="PANTHER" id="PTHR46986">
    <property type="entry name" value="ENDORIBONUCLEASE YBEY, CHLOROPLASTIC"/>
    <property type="match status" value="1"/>
</dbReference>
<dbReference type="PANTHER" id="PTHR46986:SF1">
    <property type="entry name" value="ENDORIBONUCLEASE YBEY, CHLOROPLASTIC"/>
    <property type="match status" value="1"/>
</dbReference>
<dbReference type="Pfam" id="PF02130">
    <property type="entry name" value="YbeY"/>
    <property type="match status" value="1"/>
</dbReference>
<dbReference type="SUPFAM" id="SSF55486">
    <property type="entry name" value="Metalloproteases ('zincins'), catalytic domain"/>
    <property type="match status" value="1"/>
</dbReference>
<dbReference type="PROSITE" id="PS01306">
    <property type="entry name" value="UPF0054"/>
    <property type="match status" value="1"/>
</dbReference>
<sequence length="153" mass="16848">MSIEINNESAVEVDEPLIQRLATYALDTLHVHPDAELAIVMVDEGAMEQLHVQWMDEPGPTDVLSFPMDELRPGTEDRPTPAGLLGDIVVCPQVAAEQAVTAGHSTMEEILLLTAHGILHLLGFDHAEPDEEREMFGLQRDILIGFAMSERGR</sequence>
<comment type="function">
    <text evidence="1">Single strand-specific metallo-endoribonuclease involved in late-stage 70S ribosome quality control and in maturation of the 3' terminus of the 16S rRNA.</text>
</comment>
<comment type="cofactor">
    <cofactor evidence="1">
        <name>Zn(2+)</name>
        <dbReference type="ChEBI" id="CHEBI:29105"/>
    </cofactor>
    <text evidence="1">Binds 1 zinc ion.</text>
</comment>
<comment type="subcellular location">
    <subcellularLocation>
        <location evidence="1">Cytoplasm</location>
    </subcellularLocation>
</comment>
<comment type="similarity">
    <text evidence="1">Belongs to the endoribonuclease YbeY family.</text>
</comment>
<gene>
    <name evidence="1" type="primary">ybeY</name>
    <name type="ordered locus">CMS1734</name>
</gene>
<evidence type="ECO:0000255" key="1">
    <source>
        <dbReference type="HAMAP-Rule" id="MF_00009"/>
    </source>
</evidence>